<gene>
    <name evidence="1" type="primary">rnz</name>
    <name type="ordered locus">SSO1043</name>
</gene>
<sequence>MIQIFFLGTGAGSPSKKRKLPAFLVRREGVNILLDCGEGTQYTLMNYKLGINSIKIIGISHMHGDHVFGLLGVIASMGLLDRKETLYILGPRKLKDFLYTSFEYSKFNPSFKIEFIDNYNDENITISTFKTCHTIESQGYLIMEKDRVKIDEEKLEKEKIRDWRVIRKLKEGKTVEYNGKLLKPEDYLVIKRGSKVAYTGDTMPCQSVVDSVKGVDILIHDSTFLDEPSAYTYGHSNVTDAAKIALEASVKLLALTHISPRYEDVSEHLKMARRIFPKSILPDDLSYITIK</sequence>
<accession>Q97Z88</accession>
<keyword id="KW-0255">Endonuclease</keyword>
<keyword id="KW-0378">Hydrolase</keyword>
<keyword id="KW-0479">Metal-binding</keyword>
<keyword id="KW-0540">Nuclease</keyword>
<keyword id="KW-1185">Reference proteome</keyword>
<keyword id="KW-0819">tRNA processing</keyword>
<keyword id="KW-0862">Zinc</keyword>
<name>RNZ_SACS2</name>
<dbReference type="EC" id="3.1.26.11" evidence="1"/>
<dbReference type="EMBL" id="AE006641">
    <property type="protein sequence ID" value="AAK41305.1"/>
    <property type="molecule type" value="Genomic_DNA"/>
</dbReference>
<dbReference type="PIR" id="B90256">
    <property type="entry name" value="B90256"/>
</dbReference>
<dbReference type="RefSeq" id="WP_009989186.1">
    <property type="nucleotide sequence ID" value="NC_002754.1"/>
</dbReference>
<dbReference type="SMR" id="Q97Z88"/>
<dbReference type="FunCoup" id="Q97Z88">
    <property type="interactions" value="155"/>
</dbReference>
<dbReference type="STRING" id="273057.SSO1043"/>
<dbReference type="PaxDb" id="273057-SSO1043"/>
<dbReference type="EnsemblBacteria" id="AAK41305">
    <property type="protein sequence ID" value="AAK41305"/>
    <property type="gene ID" value="SSO1043"/>
</dbReference>
<dbReference type="GeneID" id="44129972"/>
<dbReference type="KEGG" id="sso:SSO1043"/>
<dbReference type="PATRIC" id="fig|273057.12.peg.1037"/>
<dbReference type="eggNOG" id="arCOG00501">
    <property type="taxonomic scope" value="Archaea"/>
</dbReference>
<dbReference type="HOGENOM" id="CLU_031317_2_1_2"/>
<dbReference type="InParanoid" id="Q97Z88"/>
<dbReference type="PhylomeDB" id="Q97Z88"/>
<dbReference type="Proteomes" id="UP000001974">
    <property type="component" value="Chromosome"/>
</dbReference>
<dbReference type="GO" id="GO:0042781">
    <property type="term" value="F:3'-tRNA processing endoribonuclease activity"/>
    <property type="evidence" value="ECO:0000318"/>
    <property type="project" value="GO_Central"/>
</dbReference>
<dbReference type="GO" id="GO:0008270">
    <property type="term" value="F:zinc ion binding"/>
    <property type="evidence" value="ECO:0007669"/>
    <property type="project" value="UniProtKB-UniRule"/>
</dbReference>
<dbReference type="CDD" id="cd07717">
    <property type="entry name" value="RNaseZ_ZiPD-like_MBL-fold"/>
    <property type="match status" value="1"/>
</dbReference>
<dbReference type="Gene3D" id="3.60.15.10">
    <property type="entry name" value="Ribonuclease Z/Hydroxyacylglutathione hydrolase-like"/>
    <property type="match status" value="1"/>
</dbReference>
<dbReference type="HAMAP" id="MF_01818">
    <property type="entry name" value="RNase_Z_BN"/>
    <property type="match status" value="1"/>
</dbReference>
<dbReference type="InterPro" id="IPR001279">
    <property type="entry name" value="Metallo-B-lactamas"/>
</dbReference>
<dbReference type="InterPro" id="IPR036866">
    <property type="entry name" value="RibonucZ/Hydroxyglut_hydro"/>
</dbReference>
<dbReference type="InterPro" id="IPR013471">
    <property type="entry name" value="RNase_Z/BN"/>
</dbReference>
<dbReference type="NCBIfam" id="NF000801">
    <property type="entry name" value="PRK00055.1-3"/>
    <property type="match status" value="1"/>
</dbReference>
<dbReference type="NCBIfam" id="TIGR02651">
    <property type="entry name" value="RNase_Z"/>
    <property type="match status" value="1"/>
</dbReference>
<dbReference type="PANTHER" id="PTHR46018">
    <property type="entry name" value="ZINC PHOSPHODIESTERASE ELAC PROTEIN 1"/>
    <property type="match status" value="1"/>
</dbReference>
<dbReference type="PANTHER" id="PTHR46018:SF2">
    <property type="entry name" value="ZINC PHOSPHODIESTERASE ELAC PROTEIN 1"/>
    <property type="match status" value="1"/>
</dbReference>
<dbReference type="Pfam" id="PF00753">
    <property type="entry name" value="Lactamase_B"/>
    <property type="match status" value="1"/>
</dbReference>
<dbReference type="Pfam" id="PF12706">
    <property type="entry name" value="Lactamase_B_2"/>
    <property type="match status" value="1"/>
</dbReference>
<dbReference type="SUPFAM" id="SSF56281">
    <property type="entry name" value="Metallo-hydrolase/oxidoreductase"/>
    <property type="match status" value="1"/>
</dbReference>
<feature type="chain" id="PRO_0000155937" description="Ribonuclease Z">
    <location>
        <begin position="1"/>
        <end position="291"/>
    </location>
</feature>
<feature type="active site" description="Proton acceptor" evidence="1">
    <location>
        <position position="65"/>
    </location>
</feature>
<feature type="binding site" evidence="1">
    <location>
        <position position="61"/>
    </location>
    <ligand>
        <name>Zn(2+)</name>
        <dbReference type="ChEBI" id="CHEBI:29105"/>
        <label>1</label>
        <note>catalytic</note>
    </ligand>
</feature>
<feature type="binding site" evidence="1">
    <location>
        <position position="63"/>
    </location>
    <ligand>
        <name>Zn(2+)</name>
        <dbReference type="ChEBI" id="CHEBI:29105"/>
        <label>1</label>
        <note>catalytic</note>
    </ligand>
</feature>
<feature type="binding site" evidence="1">
    <location>
        <position position="65"/>
    </location>
    <ligand>
        <name>Zn(2+)</name>
        <dbReference type="ChEBI" id="CHEBI:29105"/>
        <label>2</label>
        <note>catalytic</note>
    </ligand>
</feature>
<feature type="binding site" evidence="1">
    <location>
        <position position="66"/>
    </location>
    <ligand>
        <name>Zn(2+)</name>
        <dbReference type="ChEBI" id="CHEBI:29105"/>
        <label>2</label>
        <note>catalytic</note>
    </ligand>
</feature>
<feature type="binding site" evidence="1">
    <location>
        <position position="133"/>
    </location>
    <ligand>
        <name>Zn(2+)</name>
        <dbReference type="ChEBI" id="CHEBI:29105"/>
        <label>1</label>
        <note>catalytic</note>
    </ligand>
</feature>
<feature type="binding site" evidence="1">
    <location>
        <position position="201"/>
    </location>
    <ligand>
        <name>Zn(2+)</name>
        <dbReference type="ChEBI" id="CHEBI:29105"/>
        <label>1</label>
        <note>catalytic</note>
    </ligand>
</feature>
<feature type="binding site" evidence="1">
    <location>
        <position position="201"/>
    </location>
    <ligand>
        <name>Zn(2+)</name>
        <dbReference type="ChEBI" id="CHEBI:29105"/>
        <label>2</label>
        <note>catalytic</note>
    </ligand>
</feature>
<feature type="binding site" evidence="1">
    <location>
        <position position="257"/>
    </location>
    <ligand>
        <name>Zn(2+)</name>
        <dbReference type="ChEBI" id="CHEBI:29105"/>
        <label>2</label>
        <note>catalytic</note>
    </ligand>
</feature>
<evidence type="ECO:0000255" key="1">
    <source>
        <dbReference type="HAMAP-Rule" id="MF_01818"/>
    </source>
</evidence>
<comment type="function">
    <text evidence="1">Zinc phosphodiesterase, which displays some tRNA 3'-processing endonuclease activity. Probably involved in tRNA maturation, by removing a 3'-trailer from precursor tRNA.</text>
</comment>
<comment type="catalytic activity">
    <reaction evidence="1">
        <text>Endonucleolytic cleavage of RNA, removing extra 3' nucleotides from tRNA precursor, generating 3' termini of tRNAs. A 3'-hydroxy group is left at the tRNA terminus and a 5'-phosphoryl group is left at the trailer molecule.</text>
        <dbReference type="EC" id="3.1.26.11"/>
    </reaction>
</comment>
<comment type="cofactor">
    <cofactor evidence="1">
        <name>Zn(2+)</name>
        <dbReference type="ChEBI" id="CHEBI:29105"/>
    </cofactor>
    <text evidence="1">Binds 2 Zn(2+) ions.</text>
</comment>
<comment type="subunit">
    <text evidence="1">Homodimer.</text>
</comment>
<comment type="similarity">
    <text evidence="1">Belongs to the RNase Z family.</text>
</comment>
<protein>
    <recommendedName>
        <fullName evidence="1">Ribonuclease Z</fullName>
        <shortName evidence="1">RNase Z</shortName>
        <ecNumber evidence="1">3.1.26.11</ecNumber>
    </recommendedName>
    <alternativeName>
        <fullName evidence="1">tRNA 3 endonuclease</fullName>
    </alternativeName>
    <alternativeName>
        <fullName evidence="1">tRNase Z</fullName>
    </alternativeName>
</protein>
<proteinExistence type="inferred from homology"/>
<organism>
    <name type="scientific">Saccharolobus solfataricus (strain ATCC 35092 / DSM 1617 / JCM 11322 / P2)</name>
    <name type="common">Sulfolobus solfataricus</name>
    <dbReference type="NCBI Taxonomy" id="273057"/>
    <lineage>
        <taxon>Archaea</taxon>
        <taxon>Thermoproteota</taxon>
        <taxon>Thermoprotei</taxon>
        <taxon>Sulfolobales</taxon>
        <taxon>Sulfolobaceae</taxon>
        <taxon>Saccharolobus</taxon>
    </lineage>
</organism>
<reference key="1">
    <citation type="journal article" date="2001" name="Proc. Natl. Acad. Sci. U.S.A.">
        <title>The complete genome of the crenarchaeon Sulfolobus solfataricus P2.</title>
        <authorList>
            <person name="She Q."/>
            <person name="Singh R.K."/>
            <person name="Confalonieri F."/>
            <person name="Zivanovic Y."/>
            <person name="Allard G."/>
            <person name="Awayez M.J."/>
            <person name="Chan-Weiher C.C.-Y."/>
            <person name="Clausen I.G."/>
            <person name="Curtis B.A."/>
            <person name="De Moors A."/>
            <person name="Erauso G."/>
            <person name="Fletcher C."/>
            <person name="Gordon P.M.K."/>
            <person name="Heikamp-de Jong I."/>
            <person name="Jeffries A.C."/>
            <person name="Kozera C.J."/>
            <person name="Medina N."/>
            <person name="Peng X."/>
            <person name="Thi-Ngoc H.P."/>
            <person name="Redder P."/>
            <person name="Schenk M.E."/>
            <person name="Theriault C."/>
            <person name="Tolstrup N."/>
            <person name="Charlebois R.L."/>
            <person name="Doolittle W.F."/>
            <person name="Duguet M."/>
            <person name="Gaasterland T."/>
            <person name="Garrett R.A."/>
            <person name="Ragan M.A."/>
            <person name="Sensen C.W."/>
            <person name="Van der Oost J."/>
        </authorList>
    </citation>
    <scope>NUCLEOTIDE SEQUENCE [LARGE SCALE GENOMIC DNA]</scope>
    <source>
        <strain>ATCC 35092 / DSM 1617 / JCM 11322 / P2</strain>
    </source>
</reference>